<proteinExistence type="inferred from homology"/>
<keyword id="KW-0687">Ribonucleoprotein</keyword>
<keyword id="KW-0689">Ribosomal protein</keyword>
<gene>
    <name evidence="1" type="primary">rpmC</name>
    <name type="ordered locus">CLK_2916</name>
</gene>
<name>RL29_CLOBM</name>
<protein>
    <recommendedName>
        <fullName evidence="1">Large ribosomal subunit protein uL29</fullName>
    </recommendedName>
    <alternativeName>
        <fullName evidence="2">50S ribosomal protein L29</fullName>
    </alternativeName>
</protein>
<evidence type="ECO:0000255" key="1">
    <source>
        <dbReference type="HAMAP-Rule" id="MF_00374"/>
    </source>
</evidence>
<evidence type="ECO:0000305" key="2"/>
<accession>B1KSL7</accession>
<feature type="chain" id="PRO_1000121751" description="Large ribosomal subunit protein uL29">
    <location>
        <begin position="1"/>
        <end position="70"/>
    </location>
</feature>
<sequence>MKARELQELRKSSPQELQSKLNDLKAELFNLRFQLATGQLENPMRIREVKKSIAQIKTILREEEIRAYQQ</sequence>
<reference key="1">
    <citation type="journal article" date="2007" name="PLoS ONE">
        <title>Analysis of the neurotoxin complex genes in Clostridium botulinum A1-A4 and B1 strains: BoNT/A3, /Ba4 and /B1 clusters are located within plasmids.</title>
        <authorList>
            <person name="Smith T.J."/>
            <person name="Hill K.K."/>
            <person name="Foley B.T."/>
            <person name="Detter J.C."/>
            <person name="Munk A.C."/>
            <person name="Bruce D.C."/>
            <person name="Doggett N.A."/>
            <person name="Smith L.A."/>
            <person name="Marks J.D."/>
            <person name="Xie G."/>
            <person name="Brettin T.S."/>
        </authorList>
    </citation>
    <scope>NUCLEOTIDE SEQUENCE [LARGE SCALE GENOMIC DNA]</scope>
    <source>
        <strain>Loch Maree / Type A3</strain>
    </source>
</reference>
<organism>
    <name type="scientific">Clostridium botulinum (strain Loch Maree / Type A3)</name>
    <dbReference type="NCBI Taxonomy" id="498214"/>
    <lineage>
        <taxon>Bacteria</taxon>
        <taxon>Bacillati</taxon>
        <taxon>Bacillota</taxon>
        <taxon>Clostridia</taxon>
        <taxon>Eubacteriales</taxon>
        <taxon>Clostridiaceae</taxon>
        <taxon>Clostridium</taxon>
    </lineage>
</organism>
<dbReference type="EMBL" id="CP000962">
    <property type="protein sequence ID" value="ACA55972.1"/>
    <property type="molecule type" value="Genomic_DNA"/>
</dbReference>
<dbReference type="RefSeq" id="WP_003357691.1">
    <property type="nucleotide sequence ID" value="NC_010520.1"/>
</dbReference>
<dbReference type="SMR" id="B1KSL7"/>
<dbReference type="GeneID" id="92940242"/>
<dbReference type="KEGG" id="cbl:CLK_2916"/>
<dbReference type="HOGENOM" id="CLU_158491_5_2_9"/>
<dbReference type="GO" id="GO:0022625">
    <property type="term" value="C:cytosolic large ribosomal subunit"/>
    <property type="evidence" value="ECO:0007669"/>
    <property type="project" value="TreeGrafter"/>
</dbReference>
<dbReference type="GO" id="GO:0003735">
    <property type="term" value="F:structural constituent of ribosome"/>
    <property type="evidence" value="ECO:0007669"/>
    <property type="project" value="InterPro"/>
</dbReference>
<dbReference type="GO" id="GO:0006412">
    <property type="term" value="P:translation"/>
    <property type="evidence" value="ECO:0007669"/>
    <property type="project" value="UniProtKB-UniRule"/>
</dbReference>
<dbReference type="CDD" id="cd00427">
    <property type="entry name" value="Ribosomal_L29_HIP"/>
    <property type="match status" value="1"/>
</dbReference>
<dbReference type="FunFam" id="1.10.287.310:FF:000001">
    <property type="entry name" value="50S ribosomal protein L29"/>
    <property type="match status" value="1"/>
</dbReference>
<dbReference type="Gene3D" id="1.10.287.310">
    <property type="match status" value="1"/>
</dbReference>
<dbReference type="HAMAP" id="MF_00374">
    <property type="entry name" value="Ribosomal_uL29"/>
    <property type="match status" value="1"/>
</dbReference>
<dbReference type="InterPro" id="IPR050063">
    <property type="entry name" value="Ribosomal_protein_uL29"/>
</dbReference>
<dbReference type="InterPro" id="IPR001854">
    <property type="entry name" value="Ribosomal_uL29"/>
</dbReference>
<dbReference type="InterPro" id="IPR018254">
    <property type="entry name" value="Ribosomal_uL29_CS"/>
</dbReference>
<dbReference type="InterPro" id="IPR036049">
    <property type="entry name" value="Ribosomal_uL29_sf"/>
</dbReference>
<dbReference type="NCBIfam" id="TIGR00012">
    <property type="entry name" value="L29"/>
    <property type="match status" value="1"/>
</dbReference>
<dbReference type="PANTHER" id="PTHR10916">
    <property type="entry name" value="60S RIBOSOMAL PROTEIN L35/50S RIBOSOMAL PROTEIN L29"/>
    <property type="match status" value="1"/>
</dbReference>
<dbReference type="PANTHER" id="PTHR10916:SF0">
    <property type="entry name" value="LARGE RIBOSOMAL SUBUNIT PROTEIN UL29C"/>
    <property type="match status" value="1"/>
</dbReference>
<dbReference type="Pfam" id="PF00831">
    <property type="entry name" value="Ribosomal_L29"/>
    <property type="match status" value="1"/>
</dbReference>
<dbReference type="SUPFAM" id="SSF46561">
    <property type="entry name" value="Ribosomal protein L29 (L29p)"/>
    <property type="match status" value="1"/>
</dbReference>
<dbReference type="PROSITE" id="PS00579">
    <property type="entry name" value="RIBOSOMAL_L29"/>
    <property type="match status" value="1"/>
</dbReference>
<comment type="similarity">
    <text evidence="1">Belongs to the universal ribosomal protein uL29 family.</text>
</comment>